<comment type="function">
    <text evidence="1">Part of the high-affinity ATP-driven potassium transport (or Kdp) system, which catalyzes the hydrolysis of ATP coupled with the electrogenic transport of potassium into the cytoplasm. This subunit binds the extracellular potassium ions and delivers the ions to the membrane domain of KdpB through an intramembrane tunnel.</text>
</comment>
<comment type="subunit">
    <text evidence="1">The system is composed of three essential subunits: KdpA, KdpB and KdpC.</text>
</comment>
<comment type="subcellular location">
    <subcellularLocation>
        <location evidence="1">Cell membrane</location>
        <topology evidence="1">Multi-pass membrane protein</topology>
    </subcellularLocation>
</comment>
<comment type="similarity">
    <text evidence="1">Belongs to the KdpA family.</text>
</comment>
<name>KDPA_LISMF</name>
<organism>
    <name type="scientific">Listeria monocytogenes serotype 4b (strain F2365)</name>
    <dbReference type="NCBI Taxonomy" id="265669"/>
    <lineage>
        <taxon>Bacteria</taxon>
        <taxon>Bacillati</taxon>
        <taxon>Bacillota</taxon>
        <taxon>Bacilli</taxon>
        <taxon>Bacillales</taxon>
        <taxon>Listeriaceae</taxon>
        <taxon>Listeria</taxon>
    </lineage>
</organism>
<proteinExistence type="inferred from homology"/>
<keyword id="KW-1003">Cell membrane</keyword>
<keyword id="KW-0406">Ion transport</keyword>
<keyword id="KW-0472">Membrane</keyword>
<keyword id="KW-0630">Potassium</keyword>
<keyword id="KW-0633">Potassium transport</keyword>
<keyword id="KW-0812">Transmembrane</keyword>
<keyword id="KW-1133">Transmembrane helix</keyword>
<keyword id="KW-0813">Transport</keyword>
<feature type="chain" id="PRO_0000166504" description="Potassium-transporting ATPase potassium-binding subunit">
    <location>
        <begin position="1"/>
        <end position="561"/>
    </location>
</feature>
<feature type="transmembrane region" description="Helical" evidence="1">
    <location>
        <begin position="4"/>
        <end position="24"/>
    </location>
</feature>
<feature type="transmembrane region" description="Helical" evidence="1">
    <location>
        <begin position="65"/>
        <end position="85"/>
    </location>
</feature>
<feature type="transmembrane region" description="Helical" evidence="1">
    <location>
        <begin position="133"/>
        <end position="153"/>
    </location>
</feature>
<feature type="transmembrane region" description="Helical" evidence="1">
    <location>
        <begin position="177"/>
        <end position="197"/>
    </location>
</feature>
<feature type="transmembrane region" description="Helical" evidence="1">
    <location>
        <begin position="253"/>
        <end position="273"/>
    </location>
</feature>
<feature type="transmembrane region" description="Helical" evidence="1">
    <location>
        <begin position="285"/>
        <end position="305"/>
    </location>
</feature>
<feature type="transmembrane region" description="Helical" evidence="1">
    <location>
        <begin position="380"/>
        <end position="400"/>
    </location>
</feature>
<feature type="transmembrane region" description="Helical" evidence="1">
    <location>
        <begin position="417"/>
        <end position="437"/>
    </location>
</feature>
<feature type="transmembrane region" description="Helical" evidence="1">
    <location>
        <begin position="484"/>
        <end position="504"/>
    </location>
</feature>
<feature type="transmembrane region" description="Helical" evidence="1">
    <location>
        <begin position="528"/>
        <end position="548"/>
    </location>
</feature>
<gene>
    <name evidence="1" type="primary">kdpA</name>
    <name type="ordered locus">LMOf2365_2662</name>
</gene>
<protein>
    <recommendedName>
        <fullName evidence="1">Potassium-transporting ATPase potassium-binding subunit</fullName>
    </recommendedName>
    <alternativeName>
        <fullName evidence="1">ATP phosphohydrolase [potassium-transporting] A chain</fullName>
    </alternativeName>
    <alternativeName>
        <fullName evidence="1">Potassium-binding and translocating subunit A</fullName>
    </alternativeName>
    <alternativeName>
        <fullName evidence="1">Potassium-translocating ATPase A chain</fullName>
    </alternativeName>
</protein>
<dbReference type="EMBL" id="AE017262">
    <property type="protein sequence ID" value="AAT05427.1"/>
    <property type="molecule type" value="Genomic_DNA"/>
</dbReference>
<dbReference type="RefSeq" id="WP_003730765.1">
    <property type="nucleotide sequence ID" value="NC_002973.6"/>
</dbReference>
<dbReference type="SMR" id="Q71W89"/>
<dbReference type="KEGG" id="lmf:LMOf2365_2662"/>
<dbReference type="HOGENOM" id="CLU_018614_3_0_9"/>
<dbReference type="GO" id="GO:0005886">
    <property type="term" value="C:plasma membrane"/>
    <property type="evidence" value="ECO:0007669"/>
    <property type="project" value="UniProtKB-SubCell"/>
</dbReference>
<dbReference type="GO" id="GO:0008556">
    <property type="term" value="F:P-type potassium transmembrane transporter activity"/>
    <property type="evidence" value="ECO:0007669"/>
    <property type="project" value="InterPro"/>
</dbReference>
<dbReference type="GO" id="GO:0030955">
    <property type="term" value="F:potassium ion binding"/>
    <property type="evidence" value="ECO:0007669"/>
    <property type="project" value="UniProtKB-UniRule"/>
</dbReference>
<dbReference type="HAMAP" id="MF_00275">
    <property type="entry name" value="KdpA"/>
    <property type="match status" value="1"/>
</dbReference>
<dbReference type="InterPro" id="IPR004623">
    <property type="entry name" value="KdpA"/>
</dbReference>
<dbReference type="NCBIfam" id="TIGR00680">
    <property type="entry name" value="kdpA"/>
    <property type="match status" value="1"/>
</dbReference>
<dbReference type="PANTHER" id="PTHR30607">
    <property type="entry name" value="POTASSIUM-TRANSPORTING ATPASE A CHAIN"/>
    <property type="match status" value="1"/>
</dbReference>
<dbReference type="PANTHER" id="PTHR30607:SF2">
    <property type="entry name" value="POTASSIUM-TRANSPORTING ATPASE POTASSIUM-BINDING SUBUNIT"/>
    <property type="match status" value="1"/>
</dbReference>
<dbReference type="Pfam" id="PF03814">
    <property type="entry name" value="KdpA"/>
    <property type="match status" value="1"/>
</dbReference>
<dbReference type="PIRSF" id="PIRSF001294">
    <property type="entry name" value="K_ATPaseA"/>
    <property type="match status" value="1"/>
</dbReference>
<evidence type="ECO:0000255" key="1">
    <source>
        <dbReference type="HAMAP-Rule" id="MF_00275"/>
    </source>
</evidence>
<reference key="1">
    <citation type="journal article" date="2004" name="Nucleic Acids Res.">
        <title>Whole genome comparisons of serotype 4b and 1/2a strains of the food-borne pathogen Listeria monocytogenes reveal new insights into the core genome components of this species.</title>
        <authorList>
            <person name="Nelson K.E."/>
            <person name="Fouts D.E."/>
            <person name="Mongodin E.F."/>
            <person name="Ravel J."/>
            <person name="DeBoy R.T."/>
            <person name="Kolonay J.F."/>
            <person name="Rasko D.A."/>
            <person name="Angiuoli S.V."/>
            <person name="Gill S.R."/>
            <person name="Paulsen I.T."/>
            <person name="Peterson J.D."/>
            <person name="White O."/>
            <person name="Nelson W.C."/>
            <person name="Nierman W.C."/>
            <person name="Beanan M.J."/>
            <person name="Brinkac L.M."/>
            <person name="Daugherty S.C."/>
            <person name="Dodson R.J."/>
            <person name="Durkin A.S."/>
            <person name="Madupu R."/>
            <person name="Haft D.H."/>
            <person name="Selengut J."/>
            <person name="Van Aken S.E."/>
            <person name="Khouri H.M."/>
            <person name="Fedorova N."/>
            <person name="Forberger H.A."/>
            <person name="Tran B."/>
            <person name="Kathariou S."/>
            <person name="Wonderling L.D."/>
            <person name="Uhlich G.A."/>
            <person name="Bayles D.O."/>
            <person name="Luchansky J.B."/>
            <person name="Fraser C.M."/>
        </authorList>
    </citation>
    <scope>NUCLEOTIDE SEQUENCE [LARGE SCALE GENOMIC DNA]</scope>
    <source>
        <strain>F2365</strain>
    </source>
</reference>
<sequence length="561" mass="59321">MKYIVMQDAFFVVLLLVLAVPLGIYMYKVMIGEKVFLSRVLEPVERFGYRLMGVSEVGMSAKRYAVSVLAFSAVGFVFVMAVLMLQGFLPLNPEGMKGLSFSLAFNTAASFVSNTNWQAYSGEAALSYFSQSIGLTVQNFVSAATGIAVLFAVIRGFIWKKQKTIGNFWQDLFRVTLYILLPLSLILALLLVSQGVVQSFADYSVVETLENGAKQLIPLGPAASQIAIKQLGTNGGGFFGANSAFPFENPSSFTNLIEMLAILLIPVALVVMFGRAVKDSKQGRAIMTAMMIVFVIGVVAITISEQFAGPHYQGVATSGSMEGKEVRFGVGGSSLFAASTTAASNGAVNAMHDSLTPLGGLVPMFFMQLGEVIFGGVGSGLYGMIGFIILTVFIAGLLVGRTPEYLGKKIEPYDMKMVCLLILVPPLLTLFGTAVAVMMPSVQASVSASGAHGFSEVLYAFTSMGNNNGSAFAGFAADTTFTNMVGAVMMLLARFIPLVAALYLAQNMAGKSSVAASSGTLSTKNGMFIGLLIGVVVLVGALSFLPALALGPIADFFTTFK</sequence>
<accession>Q71W89</accession>